<comment type="function">
    <text evidence="2">Binds directly to 23S rRNA. Might be involved in E site tRNA release (Potential).</text>
</comment>
<comment type="subunit">
    <text evidence="1">Part of the 50S ribosomal subunit.</text>
</comment>
<comment type="subcellular location">
    <subcellularLocation>
        <location>Plastid</location>
        <location>Chloroplast</location>
    </subcellularLocation>
</comment>
<comment type="similarity">
    <text evidence="2">Belongs to the universal ribosomal protein uL1 family.</text>
</comment>
<protein>
    <recommendedName>
        <fullName evidence="2">Large ribosomal subunit protein uL1c</fullName>
    </recommendedName>
    <alternativeName>
        <fullName>50S ribosomal protein L1, chloroplastic</fullName>
    </alternativeName>
</protein>
<sequence length="240" mass="26817">MVKIRSRRFKILQSQISVEKMCEPIEAINLLKSGPKAKFSETFEVHCCLDLNTKYSDQQLRASVVLPKGTGKRTKIAVITNEAEVNKIKNFGVDIVGSKDLVESIANGFLEFDQLLTTPDMMPVIAKVGKILGPRGLMPSPKSGSVTSDIYNAIQEFKKGKLEYRTDKSGIVHSIIGKIDFTAEDLLNNLIAIKKSIDQNRPNGAKGKYWKNMYLCTTMSPAIKIDFNKLQELEKNYGQN</sequence>
<proteinExistence type="inferred from homology"/>
<reference key="1">
    <citation type="journal article" date="2000" name="J. Mol. Evol.">
        <title>The structure and gene repertoire of an ancient red algal plastid genome.</title>
        <authorList>
            <person name="Gloeckner G."/>
            <person name="Rosenthal A."/>
            <person name="Valentin K.-U."/>
        </authorList>
    </citation>
    <scope>NUCLEOTIDE SEQUENCE [LARGE SCALE GENOMIC DNA]</scope>
    <source>
        <strain>RK-1</strain>
    </source>
</reference>
<keyword id="KW-0150">Chloroplast</keyword>
<keyword id="KW-0934">Plastid</keyword>
<keyword id="KW-0687">Ribonucleoprotein</keyword>
<keyword id="KW-0689">Ribosomal protein</keyword>
<keyword id="KW-0694">RNA-binding</keyword>
<keyword id="KW-0699">rRNA-binding</keyword>
<geneLocation type="chloroplast"/>
<gene>
    <name type="primary">rpl1</name>
</gene>
<organism>
    <name type="scientific">Cyanidium caldarium</name>
    <name type="common">Red alga</name>
    <dbReference type="NCBI Taxonomy" id="2771"/>
    <lineage>
        <taxon>Eukaryota</taxon>
        <taxon>Rhodophyta</taxon>
        <taxon>Bangiophyceae</taxon>
        <taxon>Cyanidiales</taxon>
        <taxon>Cyanidiaceae</taxon>
        <taxon>Cyanidium</taxon>
    </lineage>
</organism>
<name>RK1_CYACA</name>
<accession>Q9TM00</accession>
<evidence type="ECO:0000250" key="1"/>
<evidence type="ECO:0000305" key="2"/>
<dbReference type="EMBL" id="AF022186">
    <property type="protein sequence ID" value="AAF12977.1"/>
    <property type="molecule type" value="Genomic_DNA"/>
</dbReference>
<dbReference type="RefSeq" id="NP_045117.1">
    <property type="nucleotide sequence ID" value="NC_001840.1"/>
</dbReference>
<dbReference type="SMR" id="Q9TM00"/>
<dbReference type="GeneID" id="800135"/>
<dbReference type="GO" id="GO:0009507">
    <property type="term" value="C:chloroplast"/>
    <property type="evidence" value="ECO:0007669"/>
    <property type="project" value="UniProtKB-SubCell"/>
</dbReference>
<dbReference type="GO" id="GO:0015934">
    <property type="term" value="C:large ribosomal subunit"/>
    <property type="evidence" value="ECO:0007669"/>
    <property type="project" value="InterPro"/>
</dbReference>
<dbReference type="GO" id="GO:0019843">
    <property type="term" value="F:rRNA binding"/>
    <property type="evidence" value="ECO:0007669"/>
    <property type="project" value="UniProtKB-UniRule"/>
</dbReference>
<dbReference type="GO" id="GO:0003735">
    <property type="term" value="F:structural constituent of ribosome"/>
    <property type="evidence" value="ECO:0007669"/>
    <property type="project" value="InterPro"/>
</dbReference>
<dbReference type="GO" id="GO:0006412">
    <property type="term" value="P:translation"/>
    <property type="evidence" value="ECO:0007669"/>
    <property type="project" value="UniProtKB-UniRule"/>
</dbReference>
<dbReference type="CDD" id="cd00403">
    <property type="entry name" value="Ribosomal_L1"/>
    <property type="match status" value="1"/>
</dbReference>
<dbReference type="FunFam" id="3.40.50.790:FF:000001">
    <property type="entry name" value="50S ribosomal protein L1"/>
    <property type="match status" value="1"/>
</dbReference>
<dbReference type="Gene3D" id="3.30.190.20">
    <property type="match status" value="1"/>
</dbReference>
<dbReference type="Gene3D" id="3.40.50.790">
    <property type="match status" value="1"/>
</dbReference>
<dbReference type="HAMAP" id="MF_01318_B">
    <property type="entry name" value="Ribosomal_uL1_B"/>
    <property type="match status" value="1"/>
</dbReference>
<dbReference type="InterPro" id="IPR005878">
    <property type="entry name" value="Ribosom_uL1_bac-type"/>
</dbReference>
<dbReference type="InterPro" id="IPR002143">
    <property type="entry name" value="Ribosomal_uL1"/>
</dbReference>
<dbReference type="InterPro" id="IPR023674">
    <property type="entry name" value="Ribosomal_uL1-like"/>
</dbReference>
<dbReference type="InterPro" id="IPR028364">
    <property type="entry name" value="Ribosomal_uL1/biogenesis"/>
</dbReference>
<dbReference type="InterPro" id="IPR016095">
    <property type="entry name" value="Ribosomal_uL1_3-a/b-sand"/>
</dbReference>
<dbReference type="InterPro" id="IPR023673">
    <property type="entry name" value="Ribosomal_uL1_CS"/>
</dbReference>
<dbReference type="NCBIfam" id="TIGR01169">
    <property type="entry name" value="rplA_bact"/>
    <property type="match status" value="1"/>
</dbReference>
<dbReference type="PANTHER" id="PTHR36427">
    <property type="entry name" value="54S RIBOSOMAL PROTEIN L1, MITOCHONDRIAL"/>
    <property type="match status" value="1"/>
</dbReference>
<dbReference type="PANTHER" id="PTHR36427:SF3">
    <property type="entry name" value="LARGE RIBOSOMAL SUBUNIT PROTEIN UL1M"/>
    <property type="match status" value="1"/>
</dbReference>
<dbReference type="Pfam" id="PF00687">
    <property type="entry name" value="Ribosomal_L1"/>
    <property type="match status" value="1"/>
</dbReference>
<dbReference type="PIRSF" id="PIRSF002155">
    <property type="entry name" value="Ribosomal_L1"/>
    <property type="match status" value="1"/>
</dbReference>
<dbReference type="SUPFAM" id="SSF56808">
    <property type="entry name" value="Ribosomal protein L1"/>
    <property type="match status" value="1"/>
</dbReference>
<dbReference type="PROSITE" id="PS01199">
    <property type="entry name" value="RIBOSOMAL_L1"/>
    <property type="match status" value="1"/>
</dbReference>
<feature type="chain" id="PRO_0000125785" description="Large ribosomal subunit protein uL1c">
    <location>
        <begin position="1"/>
        <end position="240"/>
    </location>
</feature>